<accession>Q9LXB4</accession>
<reference key="1">
    <citation type="journal article" date="2000" name="Nature">
        <title>Sequence and analysis of chromosome 5 of the plant Arabidopsis thaliana.</title>
        <authorList>
            <person name="Tabata S."/>
            <person name="Kaneko T."/>
            <person name="Nakamura Y."/>
            <person name="Kotani H."/>
            <person name="Kato T."/>
            <person name="Asamizu E."/>
            <person name="Miyajima N."/>
            <person name="Sasamoto S."/>
            <person name="Kimura T."/>
            <person name="Hosouchi T."/>
            <person name="Kawashima K."/>
            <person name="Kohara M."/>
            <person name="Matsumoto M."/>
            <person name="Matsuno A."/>
            <person name="Muraki A."/>
            <person name="Nakayama S."/>
            <person name="Nakazaki N."/>
            <person name="Naruo K."/>
            <person name="Okumura S."/>
            <person name="Shinpo S."/>
            <person name="Takeuchi C."/>
            <person name="Wada T."/>
            <person name="Watanabe A."/>
            <person name="Yamada M."/>
            <person name="Yasuda M."/>
            <person name="Sato S."/>
            <person name="de la Bastide M."/>
            <person name="Huang E."/>
            <person name="Spiegel L."/>
            <person name="Gnoj L."/>
            <person name="O'Shaughnessy A."/>
            <person name="Preston R."/>
            <person name="Habermann K."/>
            <person name="Murray J."/>
            <person name="Johnson D."/>
            <person name="Rohlfing T."/>
            <person name="Nelson J."/>
            <person name="Stoneking T."/>
            <person name="Pepin K."/>
            <person name="Spieth J."/>
            <person name="Sekhon M."/>
            <person name="Armstrong J."/>
            <person name="Becker M."/>
            <person name="Belter E."/>
            <person name="Cordum H."/>
            <person name="Cordes M."/>
            <person name="Courtney L."/>
            <person name="Courtney W."/>
            <person name="Dante M."/>
            <person name="Du H."/>
            <person name="Edwards J."/>
            <person name="Fryman J."/>
            <person name="Haakensen B."/>
            <person name="Lamar E."/>
            <person name="Latreille P."/>
            <person name="Leonard S."/>
            <person name="Meyer R."/>
            <person name="Mulvaney E."/>
            <person name="Ozersky P."/>
            <person name="Riley A."/>
            <person name="Strowmatt C."/>
            <person name="Wagner-McPherson C."/>
            <person name="Wollam A."/>
            <person name="Yoakum M."/>
            <person name="Bell M."/>
            <person name="Dedhia N."/>
            <person name="Parnell L."/>
            <person name="Shah R."/>
            <person name="Rodriguez M."/>
            <person name="Hoon See L."/>
            <person name="Vil D."/>
            <person name="Baker J."/>
            <person name="Kirchoff K."/>
            <person name="Toth K."/>
            <person name="King L."/>
            <person name="Bahret A."/>
            <person name="Miller B."/>
            <person name="Marra M.A."/>
            <person name="Martienssen R."/>
            <person name="McCombie W.R."/>
            <person name="Wilson R.K."/>
            <person name="Murphy G."/>
            <person name="Bancroft I."/>
            <person name="Volckaert G."/>
            <person name="Wambutt R."/>
            <person name="Duesterhoeft A."/>
            <person name="Stiekema W."/>
            <person name="Pohl T."/>
            <person name="Entian K.-D."/>
            <person name="Terryn N."/>
            <person name="Hartley N."/>
            <person name="Bent E."/>
            <person name="Johnson S."/>
            <person name="Langham S.-A."/>
            <person name="McCullagh B."/>
            <person name="Robben J."/>
            <person name="Grymonprez B."/>
            <person name="Zimmermann W."/>
            <person name="Ramsperger U."/>
            <person name="Wedler H."/>
            <person name="Balke K."/>
            <person name="Wedler E."/>
            <person name="Peters S."/>
            <person name="van Staveren M."/>
            <person name="Dirkse W."/>
            <person name="Mooijman P."/>
            <person name="Klein Lankhorst R."/>
            <person name="Weitzenegger T."/>
            <person name="Bothe G."/>
            <person name="Rose M."/>
            <person name="Hauf J."/>
            <person name="Berneiser S."/>
            <person name="Hempel S."/>
            <person name="Feldpausch M."/>
            <person name="Lamberth S."/>
            <person name="Villarroel R."/>
            <person name="Gielen J."/>
            <person name="Ardiles W."/>
            <person name="Bents O."/>
            <person name="Lemcke K."/>
            <person name="Kolesov G."/>
            <person name="Mayer K.F.X."/>
            <person name="Rudd S."/>
            <person name="Schoof H."/>
            <person name="Schueller C."/>
            <person name="Zaccaria P."/>
            <person name="Mewes H.-W."/>
            <person name="Bevan M."/>
            <person name="Fransz P.F."/>
        </authorList>
    </citation>
    <scope>NUCLEOTIDE SEQUENCE [LARGE SCALE GENOMIC DNA]</scope>
    <source>
        <strain>cv. Columbia</strain>
    </source>
</reference>
<reference key="2">
    <citation type="journal article" date="2017" name="Plant J.">
        <title>Araport11: a complete reannotation of the Arabidopsis thaliana reference genome.</title>
        <authorList>
            <person name="Cheng C.Y."/>
            <person name="Krishnakumar V."/>
            <person name="Chan A.P."/>
            <person name="Thibaud-Nissen F."/>
            <person name="Schobel S."/>
            <person name="Town C.D."/>
        </authorList>
    </citation>
    <scope>GENOME REANNOTATION</scope>
    <source>
        <strain>cv. Columbia</strain>
    </source>
</reference>
<gene>
    <name type="ordered locus">At5g10620</name>
    <name type="ORF">F12B17_30</name>
</gene>
<organism>
    <name type="scientific">Arabidopsis thaliana</name>
    <name type="common">Mouse-ear cress</name>
    <dbReference type="NCBI Taxonomy" id="3702"/>
    <lineage>
        <taxon>Eukaryota</taxon>
        <taxon>Viridiplantae</taxon>
        <taxon>Streptophyta</taxon>
        <taxon>Embryophyta</taxon>
        <taxon>Tracheophyta</taxon>
        <taxon>Spermatophyta</taxon>
        <taxon>Magnoliopsida</taxon>
        <taxon>eudicotyledons</taxon>
        <taxon>Gunneridae</taxon>
        <taxon>Pentapetalae</taxon>
        <taxon>rosids</taxon>
        <taxon>malvids</taxon>
        <taxon>Brassicales</taxon>
        <taxon>Brassicaceae</taxon>
        <taxon>Camelineae</taxon>
        <taxon>Arabidopsis</taxon>
    </lineage>
</organism>
<sequence length="193" mass="21533">MSISVMANSHLNQPYASASPTPQEKGRTCRYAGQAVRALPIRVITVGKKRSEGVRLLVDEYKIKLKPYCSFEDSLVRSNPRNAQDVRAQVEDEEVAMMKLIGSDDWVVVLDERGRDIDSEQMAELLGDAGNSGASRISFCIGGAYGHGTQVRKRANVTIRLSSMVLNHQIALVVLMEQLYRSWTILKGQNYHH</sequence>
<proteinExistence type="inferred from homology"/>
<keyword id="KW-0489">Methyltransferase</keyword>
<keyword id="KW-1185">Reference proteome</keyword>
<keyword id="KW-0949">S-adenosyl-L-methionine</keyword>
<keyword id="KW-0808">Transferase</keyword>
<feature type="chain" id="PRO_0000198221" description="Putative RNA methyltransferase At5g10620">
    <location>
        <begin position="1"/>
        <end position="193"/>
    </location>
</feature>
<feature type="binding site" evidence="1">
    <location>
        <position position="110"/>
    </location>
    <ligand>
        <name>S-adenosyl-L-methionine</name>
        <dbReference type="ChEBI" id="CHEBI:59789"/>
    </ligand>
</feature>
<feature type="binding site" evidence="1">
    <location>
        <position position="142"/>
    </location>
    <ligand>
        <name>S-adenosyl-L-methionine</name>
        <dbReference type="ChEBI" id="CHEBI:59789"/>
    </ligand>
</feature>
<feature type="binding site" evidence="1">
    <location>
        <begin position="161"/>
        <end position="166"/>
    </location>
    <ligand>
        <name>S-adenosyl-L-methionine</name>
        <dbReference type="ChEBI" id="CHEBI:59789"/>
    </ligand>
</feature>
<comment type="similarity">
    <text evidence="2">Belongs to the RNA methyltransferase RlmH family.</text>
</comment>
<dbReference type="EC" id="2.1.1.-"/>
<dbReference type="EMBL" id="AL353995">
    <property type="protein sequence ID" value="CAB89381.1"/>
    <property type="molecule type" value="Genomic_DNA"/>
</dbReference>
<dbReference type="EMBL" id="CP002688">
    <property type="protein sequence ID" value="AED91572.1"/>
    <property type="molecule type" value="Genomic_DNA"/>
</dbReference>
<dbReference type="EMBL" id="CP002688">
    <property type="protein sequence ID" value="ANM68739.1"/>
    <property type="molecule type" value="Genomic_DNA"/>
</dbReference>
<dbReference type="PIR" id="T49977">
    <property type="entry name" value="T49977"/>
</dbReference>
<dbReference type="RefSeq" id="NP_001318530.1">
    <property type="nucleotide sequence ID" value="NM_001343124.1"/>
</dbReference>
<dbReference type="RefSeq" id="NP_196624.1">
    <property type="nucleotide sequence ID" value="NM_121100.3"/>
</dbReference>
<dbReference type="SMR" id="Q9LXB4"/>
<dbReference type="FunCoup" id="Q9LXB4">
    <property type="interactions" value="49"/>
</dbReference>
<dbReference type="STRING" id="3702.Q9LXB4"/>
<dbReference type="GlyGen" id="Q9LXB4">
    <property type="glycosylation" value="1 site"/>
</dbReference>
<dbReference type="PaxDb" id="3702-AT5G10620.1"/>
<dbReference type="ProteomicsDB" id="243023"/>
<dbReference type="EnsemblPlants" id="AT5G10620.1">
    <property type="protein sequence ID" value="AT5G10620.1"/>
    <property type="gene ID" value="AT5G10620"/>
</dbReference>
<dbReference type="EnsemblPlants" id="AT5G10620.2">
    <property type="protein sequence ID" value="AT5G10620.2"/>
    <property type="gene ID" value="AT5G10620"/>
</dbReference>
<dbReference type="GeneID" id="830927"/>
<dbReference type="Gramene" id="AT5G10620.1">
    <property type="protein sequence ID" value="AT5G10620.1"/>
    <property type="gene ID" value="AT5G10620"/>
</dbReference>
<dbReference type="Gramene" id="AT5G10620.2">
    <property type="protein sequence ID" value="AT5G10620.2"/>
    <property type="gene ID" value="AT5G10620"/>
</dbReference>
<dbReference type="KEGG" id="ath:AT5G10620"/>
<dbReference type="Araport" id="AT5G10620"/>
<dbReference type="TAIR" id="AT5G10620"/>
<dbReference type="eggNOG" id="ENOG502RXV6">
    <property type="taxonomic scope" value="Eukaryota"/>
</dbReference>
<dbReference type="HOGENOM" id="CLU_100552_2_0_1"/>
<dbReference type="InParanoid" id="Q9LXB4"/>
<dbReference type="OMA" id="NEPYHHQ"/>
<dbReference type="PhylomeDB" id="Q9LXB4"/>
<dbReference type="PRO" id="PR:Q9LXB4"/>
<dbReference type="Proteomes" id="UP000006548">
    <property type="component" value="Chromosome 5"/>
</dbReference>
<dbReference type="ExpressionAtlas" id="Q9LXB4">
    <property type="expression patterns" value="baseline and differential"/>
</dbReference>
<dbReference type="GO" id="GO:0008168">
    <property type="term" value="F:methyltransferase activity"/>
    <property type="evidence" value="ECO:0007669"/>
    <property type="project" value="UniProtKB-KW"/>
</dbReference>
<dbReference type="GO" id="GO:0032259">
    <property type="term" value="P:methylation"/>
    <property type="evidence" value="ECO:0007669"/>
    <property type="project" value="UniProtKB-KW"/>
</dbReference>
<dbReference type="GO" id="GO:0006364">
    <property type="term" value="P:rRNA processing"/>
    <property type="evidence" value="ECO:0007669"/>
    <property type="project" value="InterPro"/>
</dbReference>
<dbReference type="CDD" id="cd18081">
    <property type="entry name" value="RlmH-like"/>
    <property type="match status" value="1"/>
</dbReference>
<dbReference type="Gene3D" id="3.40.1280.10">
    <property type="match status" value="1"/>
</dbReference>
<dbReference type="HAMAP" id="MF_00658">
    <property type="entry name" value="23SrRNA_methyltr_H"/>
    <property type="match status" value="1"/>
</dbReference>
<dbReference type="InterPro" id="IPR029028">
    <property type="entry name" value="Alpha/beta_knot_MTases"/>
</dbReference>
<dbReference type="InterPro" id="IPR003742">
    <property type="entry name" value="RlmH-like"/>
</dbReference>
<dbReference type="InterPro" id="IPR029026">
    <property type="entry name" value="tRNA_m1G_MTases_N"/>
</dbReference>
<dbReference type="PANTHER" id="PTHR33603">
    <property type="entry name" value="METHYLTRANSFERASE"/>
    <property type="match status" value="1"/>
</dbReference>
<dbReference type="PANTHER" id="PTHR33603:SF1">
    <property type="entry name" value="RIBOSOMAL RNA LARGE SUBUNIT METHYLTRANSFERASE H"/>
    <property type="match status" value="1"/>
</dbReference>
<dbReference type="Pfam" id="PF02590">
    <property type="entry name" value="SPOUT_MTase"/>
    <property type="match status" value="1"/>
</dbReference>
<dbReference type="PIRSF" id="PIRSF004505">
    <property type="entry name" value="MT_bac"/>
    <property type="match status" value="1"/>
</dbReference>
<dbReference type="SFLD" id="SFLDS00070">
    <property type="entry name" value="SPOUT_Methyltransferase"/>
    <property type="match status" value="1"/>
</dbReference>
<dbReference type="SUPFAM" id="SSF75217">
    <property type="entry name" value="alpha/beta knot"/>
    <property type="match status" value="1"/>
</dbReference>
<protein>
    <recommendedName>
        <fullName>Putative RNA methyltransferase At5g10620</fullName>
        <ecNumber>2.1.1.-</ecNumber>
    </recommendedName>
</protein>
<name>Y5620_ARATH</name>
<evidence type="ECO:0000250" key="1">
    <source>
        <dbReference type="UniProtKB" id="P0A8I8"/>
    </source>
</evidence>
<evidence type="ECO:0000305" key="2"/>